<sequence>MTPVHFSFTSAFILGLMGLAFHRTHLLSALLCLEGMMLSLFIALSLWALQMEATGYSVAPMLLLAFSACEASAGLALLVATARTHGTDRLQSLNLLQC</sequence>
<evidence type="ECO:0000250" key="1"/>
<evidence type="ECO:0000250" key="2">
    <source>
        <dbReference type="UniProtKB" id="P03901"/>
    </source>
</evidence>
<evidence type="ECO:0000255" key="3"/>
<evidence type="ECO:0000305" key="4"/>
<proteinExistence type="inferred from homology"/>
<gene>
    <name type="primary">MT-ND4L</name>
    <name type="synonym">MTND4L</name>
    <name type="synonym">NADH4L</name>
    <name type="synonym">ND4L</name>
</gene>
<comment type="function">
    <text evidence="2">Core subunit of the mitochondrial membrane respiratory chain NADH dehydrogenase (Complex I) which catalyzes electron transfer from NADH through the respiratory chain, using ubiquinone as an electron acceptor. Part of the enzyme membrane arm which is embedded in the lipid bilayer and involved in proton translocation.</text>
</comment>
<comment type="catalytic activity">
    <reaction evidence="2">
        <text>a ubiquinone + NADH + 5 H(+)(in) = a ubiquinol + NAD(+) + 4 H(+)(out)</text>
        <dbReference type="Rhea" id="RHEA:29091"/>
        <dbReference type="Rhea" id="RHEA-COMP:9565"/>
        <dbReference type="Rhea" id="RHEA-COMP:9566"/>
        <dbReference type="ChEBI" id="CHEBI:15378"/>
        <dbReference type="ChEBI" id="CHEBI:16389"/>
        <dbReference type="ChEBI" id="CHEBI:17976"/>
        <dbReference type="ChEBI" id="CHEBI:57540"/>
        <dbReference type="ChEBI" id="CHEBI:57945"/>
        <dbReference type="EC" id="7.1.1.2"/>
    </reaction>
    <physiologicalReaction direction="left-to-right" evidence="2">
        <dbReference type="Rhea" id="RHEA:29092"/>
    </physiologicalReaction>
</comment>
<comment type="subcellular location">
    <subcellularLocation>
        <location evidence="1">Mitochondrion membrane</location>
        <topology evidence="1">Multi-pass membrane protein</topology>
    </subcellularLocation>
</comment>
<comment type="similarity">
    <text evidence="4">Belongs to the complex I subunit 4L family.</text>
</comment>
<accession>P69307</accession>
<accession>P11630</accession>
<organism>
    <name type="scientific">Oncorhynchus tshawytscha</name>
    <name type="common">Chinook salmon</name>
    <name type="synonym">Salmo tshawytscha</name>
    <dbReference type="NCBI Taxonomy" id="74940"/>
    <lineage>
        <taxon>Eukaryota</taxon>
        <taxon>Metazoa</taxon>
        <taxon>Chordata</taxon>
        <taxon>Craniata</taxon>
        <taxon>Vertebrata</taxon>
        <taxon>Euteleostomi</taxon>
        <taxon>Actinopterygii</taxon>
        <taxon>Neopterygii</taxon>
        <taxon>Teleostei</taxon>
        <taxon>Protacanthopterygii</taxon>
        <taxon>Salmoniformes</taxon>
        <taxon>Salmonidae</taxon>
        <taxon>Salmoninae</taxon>
        <taxon>Oncorhynchus</taxon>
    </lineage>
</organism>
<reference key="1">
    <citation type="journal article" date="1989" name="J. Mol. Evol.">
        <title>Variation in salmonid mitochondrial DNA: evolutionary constraints and mechanisms of substitution.</title>
        <authorList>
            <person name="Thomas W.K."/>
            <person name="Beckenbach A.T."/>
        </authorList>
    </citation>
    <scope>NUCLEOTIDE SEQUENCE OF 1-92</scope>
</reference>
<geneLocation type="mitochondrion"/>
<feature type="chain" id="PRO_0000118461" description="NADH-ubiquinone oxidoreductase chain 4L">
    <location>
        <begin position="1"/>
        <end position="98"/>
    </location>
</feature>
<feature type="transmembrane region" description="Helical" evidence="3">
    <location>
        <begin position="1"/>
        <end position="21"/>
    </location>
</feature>
<feature type="transmembrane region" description="Helical" evidence="3">
    <location>
        <begin position="29"/>
        <end position="49"/>
    </location>
</feature>
<feature type="transmembrane region" description="Helical" evidence="3">
    <location>
        <begin position="58"/>
        <end position="78"/>
    </location>
</feature>
<name>NU4LM_ONCTS</name>
<protein>
    <recommendedName>
        <fullName>NADH-ubiquinone oxidoreductase chain 4L</fullName>
        <ecNumber>7.1.1.2</ecNumber>
    </recommendedName>
    <alternativeName>
        <fullName>NADH dehydrogenase subunit 4L</fullName>
    </alternativeName>
</protein>
<keyword id="KW-0249">Electron transport</keyword>
<keyword id="KW-0472">Membrane</keyword>
<keyword id="KW-0496">Mitochondrion</keyword>
<keyword id="KW-0520">NAD</keyword>
<keyword id="KW-1185">Reference proteome</keyword>
<keyword id="KW-0679">Respiratory chain</keyword>
<keyword id="KW-1278">Translocase</keyword>
<keyword id="KW-0812">Transmembrane</keyword>
<keyword id="KW-1133">Transmembrane helix</keyword>
<keyword id="KW-0813">Transport</keyword>
<keyword id="KW-0830">Ubiquinone</keyword>
<dbReference type="EC" id="7.1.1.2"/>
<dbReference type="PIR" id="G30401">
    <property type="entry name" value="G30401"/>
</dbReference>
<dbReference type="RefSeq" id="NP_148946.1">
    <property type="nucleotide sequence ID" value="NC_002980.1"/>
</dbReference>
<dbReference type="SMR" id="P69307"/>
<dbReference type="Ensembl" id="ENSOTST00005000028.1">
    <property type="protein sequence ID" value="ENSOTSP00005000010.1"/>
    <property type="gene ID" value="ENSOTSG00005000028.1"/>
</dbReference>
<dbReference type="GeneID" id="803443"/>
<dbReference type="KEGG" id="otw:KEF73_p05"/>
<dbReference type="CTD" id="4539"/>
<dbReference type="GeneTree" id="ENSGT00940000164968"/>
<dbReference type="OrthoDB" id="490049at7898"/>
<dbReference type="Proteomes" id="UP000694402">
    <property type="component" value="Unassembled WGS sequence"/>
</dbReference>
<dbReference type="GO" id="GO:0031966">
    <property type="term" value="C:mitochondrial membrane"/>
    <property type="evidence" value="ECO:0007669"/>
    <property type="project" value="UniProtKB-SubCell"/>
</dbReference>
<dbReference type="GO" id="GO:0045271">
    <property type="term" value="C:respiratory chain complex I"/>
    <property type="evidence" value="ECO:0000250"/>
    <property type="project" value="UniProtKB"/>
</dbReference>
<dbReference type="GO" id="GO:0008137">
    <property type="term" value="F:NADH dehydrogenase (ubiquinone) activity"/>
    <property type="evidence" value="ECO:0000250"/>
    <property type="project" value="UniProtKB"/>
</dbReference>
<dbReference type="GO" id="GO:0042773">
    <property type="term" value="P:ATP synthesis coupled electron transport"/>
    <property type="evidence" value="ECO:0007669"/>
    <property type="project" value="InterPro"/>
</dbReference>
<dbReference type="FunFam" id="1.10.287.3510:FF:000002">
    <property type="entry name" value="NADH-ubiquinone oxidoreductase chain 4L"/>
    <property type="match status" value="1"/>
</dbReference>
<dbReference type="Gene3D" id="1.10.287.3510">
    <property type="match status" value="1"/>
</dbReference>
<dbReference type="InterPro" id="IPR001133">
    <property type="entry name" value="NADH_UbQ_OxRdtase_chain4L/K"/>
</dbReference>
<dbReference type="InterPro" id="IPR039428">
    <property type="entry name" value="NUOK/Mnh_C1-like"/>
</dbReference>
<dbReference type="PANTHER" id="PTHR11434:SF0">
    <property type="entry name" value="NADH-UBIQUINONE OXIDOREDUCTASE CHAIN 4L"/>
    <property type="match status" value="1"/>
</dbReference>
<dbReference type="PANTHER" id="PTHR11434">
    <property type="entry name" value="NADH-UBIQUINONE OXIDOREDUCTASE SUBUNIT ND4L"/>
    <property type="match status" value="1"/>
</dbReference>
<dbReference type="Pfam" id="PF00420">
    <property type="entry name" value="Oxidored_q2"/>
    <property type="match status" value="1"/>
</dbReference>